<name>ACP_SALSV</name>
<protein>
    <recommendedName>
        <fullName evidence="1">Acyl carrier protein</fullName>
        <shortName evidence="1">ACP</shortName>
    </recommendedName>
</protein>
<dbReference type="EMBL" id="CP001127">
    <property type="protein sequence ID" value="ACF92091.1"/>
    <property type="molecule type" value="Genomic_DNA"/>
</dbReference>
<dbReference type="RefSeq" id="WP_000103754.1">
    <property type="nucleotide sequence ID" value="NC_011094.1"/>
</dbReference>
<dbReference type="SMR" id="B4TTG0"/>
<dbReference type="GeneID" id="98387866"/>
<dbReference type="KEGG" id="sew:SeSA_A1266"/>
<dbReference type="HOGENOM" id="CLU_108696_5_1_6"/>
<dbReference type="UniPathway" id="UPA00094"/>
<dbReference type="Proteomes" id="UP000001865">
    <property type="component" value="Chromosome"/>
</dbReference>
<dbReference type="GO" id="GO:0005829">
    <property type="term" value="C:cytosol"/>
    <property type="evidence" value="ECO:0007669"/>
    <property type="project" value="TreeGrafter"/>
</dbReference>
<dbReference type="GO" id="GO:0016020">
    <property type="term" value="C:membrane"/>
    <property type="evidence" value="ECO:0007669"/>
    <property type="project" value="GOC"/>
</dbReference>
<dbReference type="GO" id="GO:0000035">
    <property type="term" value="F:acyl binding"/>
    <property type="evidence" value="ECO:0007669"/>
    <property type="project" value="TreeGrafter"/>
</dbReference>
<dbReference type="GO" id="GO:0000036">
    <property type="term" value="F:acyl carrier activity"/>
    <property type="evidence" value="ECO:0007669"/>
    <property type="project" value="UniProtKB-UniRule"/>
</dbReference>
<dbReference type="GO" id="GO:0009245">
    <property type="term" value="P:lipid A biosynthetic process"/>
    <property type="evidence" value="ECO:0007669"/>
    <property type="project" value="TreeGrafter"/>
</dbReference>
<dbReference type="FunFam" id="1.10.1200.10:FF:000001">
    <property type="entry name" value="Acyl carrier protein"/>
    <property type="match status" value="1"/>
</dbReference>
<dbReference type="Gene3D" id="1.10.1200.10">
    <property type="entry name" value="ACP-like"/>
    <property type="match status" value="1"/>
</dbReference>
<dbReference type="HAMAP" id="MF_01217">
    <property type="entry name" value="Acyl_carrier"/>
    <property type="match status" value="1"/>
</dbReference>
<dbReference type="InterPro" id="IPR003231">
    <property type="entry name" value="ACP"/>
</dbReference>
<dbReference type="InterPro" id="IPR036736">
    <property type="entry name" value="ACP-like_sf"/>
</dbReference>
<dbReference type="InterPro" id="IPR009081">
    <property type="entry name" value="PP-bd_ACP"/>
</dbReference>
<dbReference type="InterPro" id="IPR006162">
    <property type="entry name" value="Ppantetheine_attach_site"/>
</dbReference>
<dbReference type="NCBIfam" id="TIGR00517">
    <property type="entry name" value="acyl_carrier"/>
    <property type="match status" value="1"/>
</dbReference>
<dbReference type="NCBIfam" id="NF002148">
    <property type="entry name" value="PRK00982.1-2"/>
    <property type="match status" value="1"/>
</dbReference>
<dbReference type="NCBIfam" id="NF002149">
    <property type="entry name" value="PRK00982.1-3"/>
    <property type="match status" value="1"/>
</dbReference>
<dbReference type="NCBIfam" id="NF002150">
    <property type="entry name" value="PRK00982.1-4"/>
    <property type="match status" value="1"/>
</dbReference>
<dbReference type="NCBIfam" id="NF002151">
    <property type="entry name" value="PRK00982.1-5"/>
    <property type="match status" value="1"/>
</dbReference>
<dbReference type="PANTHER" id="PTHR20863">
    <property type="entry name" value="ACYL CARRIER PROTEIN"/>
    <property type="match status" value="1"/>
</dbReference>
<dbReference type="PANTHER" id="PTHR20863:SF76">
    <property type="entry name" value="CARRIER DOMAIN-CONTAINING PROTEIN"/>
    <property type="match status" value="1"/>
</dbReference>
<dbReference type="Pfam" id="PF00550">
    <property type="entry name" value="PP-binding"/>
    <property type="match status" value="1"/>
</dbReference>
<dbReference type="SUPFAM" id="SSF47336">
    <property type="entry name" value="ACP-like"/>
    <property type="match status" value="1"/>
</dbReference>
<dbReference type="PROSITE" id="PS50075">
    <property type="entry name" value="CARRIER"/>
    <property type="match status" value="1"/>
</dbReference>
<dbReference type="PROSITE" id="PS00012">
    <property type="entry name" value="PHOSPHOPANTETHEINE"/>
    <property type="match status" value="1"/>
</dbReference>
<proteinExistence type="inferred from homology"/>
<sequence length="78" mass="8640">MSTIEERVKKIIGEQLGVKQEEVTNNASFVEDLGADSLDTVELVMALEEEFDTEIPDEEAEKITTVQAAIDYINGHQA</sequence>
<feature type="chain" id="PRO_1000139067" description="Acyl carrier protein">
    <location>
        <begin position="1"/>
        <end position="78"/>
    </location>
</feature>
<feature type="domain" description="Carrier" evidence="2">
    <location>
        <begin position="2"/>
        <end position="77"/>
    </location>
</feature>
<feature type="modified residue" description="O-(pantetheine 4'-phosphoryl)serine" evidence="2">
    <location>
        <position position="37"/>
    </location>
</feature>
<gene>
    <name evidence="1" type="primary">acpP</name>
    <name type="ordered locus">SeSA_A1266</name>
</gene>
<accession>B4TTG0</accession>
<keyword id="KW-0963">Cytoplasm</keyword>
<keyword id="KW-0275">Fatty acid biosynthesis</keyword>
<keyword id="KW-0276">Fatty acid metabolism</keyword>
<keyword id="KW-0444">Lipid biosynthesis</keyword>
<keyword id="KW-0443">Lipid metabolism</keyword>
<keyword id="KW-0596">Phosphopantetheine</keyword>
<keyword id="KW-0597">Phosphoprotein</keyword>
<evidence type="ECO:0000255" key="1">
    <source>
        <dbReference type="HAMAP-Rule" id="MF_01217"/>
    </source>
</evidence>
<evidence type="ECO:0000255" key="2">
    <source>
        <dbReference type="PROSITE-ProRule" id="PRU00258"/>
    </source>
</evidence>
<comment type="function">
    <text evidence="1">Carrier of the growing fatty acid chain in fatty acid biosynthesis.</text>
</comment>
<comment type="pathway">
    <text evidence="1">Lipid metabolism; fatty acid biosynthesis.</text>
</comment>
<comment type="subcellular location">
    <subcellularLocation>
        <location evidence="1">Cytoplasm</location>
    </subcellularLocation>
</comment>
<comment type="PTM">
    <text evidence="1">4'-phosphopantetheine is transferred from CoA to a specific serine of apo-ACP by AcpS. This modification is essential for activity because fatty acids are bound in thioester linkage to the sulfhydryl of the prosthetic group.</text>
</comment>
<comment type="similarity">
    <text evidence="1">Belongs to the acyl carrier protein (ACP) family.</text>
</comment>
<organism>
    <name type="scientific">Salmonella schwarzengrund (strain CVM19633)</name>
    <dbReference type="NCBI Taxonomy" id="439843"/>
    <lineage>
        <taxon>Bacteria</taxon>
        <taxon>Pseudomonadati</taxon>
        <taxon>Pseudomonadota</taxon>
        <taxon>Gammaproteobacteria</taxon>
        <taxon>Enterobacterales</taxon>
        <taxon>Enterobacteriaceae</taxon>
        <taxon>Salmonella</taxon>
    </lineage>
</organism>
<reference key="1">
    <citation type="journal article" date="2011" name="J. Bacteriol.">
        <title>Comparative genomics of 28 Salmonella enterica isolates: evidence for CRISPR-mediated adaptive sublineage evolution.</title>
        <authorList>
            <person name="Fricke W.F."/>
            <person name="Mammel M.K."/>
            <person name="McDermott P.F."/>
            <person name="Tartera C."/>
            <person name="White D.G."/>
            <person name="Leclerc J.E."/>
            <person name="Ravel J."/>
            <person name="Cebula T.A."/>
        </authorList>
    </citation>
    <scope>NUCLEOTIDE SEQUENCE [LARGE SCALE GENOMIC DNA]</scope>
    <source>
        <strain>CVM19633</strain>
    </source>
</reference>